<keyword id="KW-0067">ATP-binding</keyword>
<keyword id="KW-0133">Cell shape</keyword>
<keyword id="KW-0961">Cell wall biogenesis/degradation</keyword>
<keyword id="KW-0963">Cytoplasm</keyword>
<keyword id="KW-0436">Ligase</keyword>
<keyword id="KW-0460">Magnesium</keyword>
<keyword id="KW-0464">Manganese</keyword>
<keyword id="KW-0479">Metal-binding</keyword>
<keyword id="KW-0547">Nucleotide-binding</keyword>
<keyword id="KW-0573">Peptidoglycan synthesis</keyword>
<keyword id="KW-1185">Reference proteome</keyword>
<dbReference type="EC" id="6.3.2.4" evidence="2"/>
<dbReference type="EMBL" id="CP001280">
    <property type="protein sequence ID" value="ACK52381.1"/>
    <property type="molecule type" value="Genomic_DNA"/>
</dbReference>
<dbReference type="RefSeq" id="WP_012592450.1">
    <property type="nucleotide sequence ID" value="NC_011666.1"/>
</dbReference>
<dbReference type="SMR" id="B8ETM9"/>
<dbReference type="STRING" id="395965.Msil_3492"/>
<dbReference type="KEGG" id="msl:Msil_3492"/>
<dbReference type="eggNOG" id="COG1181">
    <property type="taxonomic scope" value="Bacteria"/>
</dbReference>
<dbReference type="HOGENOM" id="CLU_039268_1_1_5"/>
<dbReference type="OrthoDB" id="9813261at2"/>
<dbReference type="UniPathway" id="UPA00219"/>
<dbReference type="Proteomes" id="UP000002257">
    <property type="component" value="Chromosome"/>
</dbReference>
<dbReference type="GO" id="GO:0005737">
    <property type="term" value="C:cytoplasm"/>
    <property type="evidence" value="ECO:0007669"/>
    <property type="project" value="UniProtKB-SubCell"/>
</dbReference>
<dbReference type="GO" id="GO:0005524">
    <property type="term" value="F:ATP binding"/>
    <property type="evidence" value="ECO:0007669"/>
    <property type="project" value="UniProtKB-KW"/>
</dbReference>
<dbReference type="GO" id="GO:0008716">
    <property type="term" value="F:D-alanine-D-alanine ligase activity"/>
    <property type="evidence" value="ECO:0007669"/>
    <property type="project" value="UniProtKB-UniRule"/>
</dbReference>
<dbReference type="GO" id="GO:0046872">
    <property type="term" value="F:metal ion binding"/>
    <property type="evidence" value="ECO:0007669"/>
    <property type="project" value="UniProtKB-KW"/>
</dbReference>
<dbReference type="GO" id="GO:0071555">
    <property type="term" value="P:cell wall organization"/>
    <property type="evidence" value="ECO:0007669"/>
    <property type="project" value="UniProtKB-KW"/>
</dbReference>
<dbReference type="GO" id="GO:0009252">
    <property type="term" value="P:peptidoglycan biosynthetic process"/>
    <property type="evidence" value="ECO:0007669"/>
    <property type="project" value="UniProtKB-UniRule"/>
</dbReference>
<dbReference type="GO" id="GO:0008360">
    <property type="term" value="P:regulation of cell shape"/>
    <property type="evidence" value="ECO:0007669"/>
    <property type="project" value="UniProtKB-KW"/>
</dbReference>
<dbReference type="Gene3D" id="3.40.50.20">
    <property type="match status" value="1"/>
</dbReference>
<dbReference type="Gene3D" id="3.30.1490.20">
    <property type="entry name" value="ATP-grasp fold, A domain"/>
    <property type="match status" value="1"/>
</dbReference>
<dbReference type="Gene3D" id="3.30.470.20">
    <property type="entry name" value="ATP-grasp fold, B domain"/>
    <property type="match status" value="1"/>
</dbReference>
<dbReference type="HAMAP" id="MF_00047">
    <property type="entry name" value="Dala_Dala_lig"/>
    <property type="match status" value="1"/>
</dbReference>
<dbReference type="InterPro" id="IPR011761">
    <property type="entry name" value="ATP-grasp"/>
</dbReference>
<dbReference type="InterPro" id="IPR013815">
    <property type="entry name" value="ATP_grasp_subdomain_1"/>
</dbReference>
<dbReference type="InterPro" id="IPR000291">
    <property type="entry name" value="D-Ala_lig_Van_CS"/>
</dbReference>
<dbReference type="InterPro" id="IPR005905">
    <property type="entry name" value="D_ala_D_ala"/>
</dbReference>
<dbReference type="InterPro" id="IPR011095">
    <property type="entry name" value="Dala_Dala_lig_C"/>
</dbReference>
<dbReference type="InterPro" id="IPR011127">
    <property type="entry name" value="Dala_Dala_lig_N"/>
</dbReference>
<dbReference type="InterPro" id="IPR016185">
    <property type="entry name" value="PreATP-grasp_dom_sf"/>
</dbReference>
<dbReference type="NCBIfam" id="TIGR01205">
    <property type="entry name" value="D_ala_D_alaTIGR"/>
    <property type="match status" value="1"/>
</dbReference>
<dbReference type="NCBIfam" id="NF002378">
    <property type="entry name" value="PRK01372.1"/>
    <property type="match status" value="1"/>
</dbReference>
<dbReference type="PANTHER" id="PTHR23132">
    <property type="entry name" value="D-ALANINE--D-ALANINE LIGASE"/>
    <property type="match status" value="1"/>
</dbReference>
<dbReference type="PANTHER" id="PTHR23132:SF23">
    <property type="entry name" value="D-ALANINE--D-ALANINE LIGASE B"/>
    <property type="match status" value="1"/>
</dbReference>
<dbReference type="Pfam" id="PF07478">
    <property type="entry name" value="Dala_Dala_lig_C"/>
    <property type="match status" value="1"/>
</dbReference>
<dbReference type="Pfam" id="PF01820">
    <property type="entry name" value="Dala_Dala_lig_N"/>
    <property type="match status" value="1"/>
</dbReference>
<dbReference type="PIRSF" id="PIRSF039102">
    <property type="entry name" value="Ddl/VanB"/>
    <property type="match status" value="1"/>
</dbReference>
<dbReference type="SUPFAM" id="SSF56059">
    <property type="entry name" value="Glutathione synthetase ATP-binding domain-like"/>
    <property type="match status" value="1"/>
</dbReference>
<dbReference type="SUPFAM" id="SSF52440">
    <property type="entry name" value="PreATP-grasp domain"/>
    <property type="match status" value="1"/>
</dbReference>
<dbReference type="PROSITE" id="PS50975">
    <property type="entry name" value="ATP_GRASP"/>
    <property type="match status" value="1"/>
</dbReference>
<dbReference type="PROSITE" id="PS00843">
    <property type="entry name" value="DALA_DALA_LIGASE_1"/>
    <property type="match status" value="1"/>
</dbReference>
<dbReference type="PROSITE" id="PS00844">
    <property type="entry name" value="DALA_DALA_LIGASE_2"/>
    <property type="match status" value="1"/>
</dbReference>
<name>DDL_METSB</name>
<proteinExistence type="inferred from homology"/>
<feature type="chain" id="PRO_1000189741" description="D-alanine--D-alanine ligase">
    <location>
        <begin position="1"/>
        <end position="307"/>
    </location>
</feature>
<feature type="domain" description="ATP-grasp" evidence="2">
    <location>
        <begin position="101"/>
        <end position="301"/>
    </location>
</feature>
<feature type="binding site" evidence="2">
    <location>
        <begin position="128"/>
        <end position="182"/>
    </location>
    <ligand>
        <name>ATP</name>
        <dbReference type="ChEBI" id="CHEBI:30616"/>
    </ligand>
</feature>
<feature type="binding site" evidence="2">
    <location>
        <position position="251"/>
    </location>
    <ligand>
        <name>Mg(2+)</name>
        <dbReference type="ChEBI" id="CHEBI:18420"/>
        <label>1</label>
    </ligand>
</feature>
<feature type="binding site" evidence="2">
    <location>
        <position position="268"/>
    </location>
    <ligand>
        <name>Mg(2+)</name>
        <dbReference type="ChEBI" id="CHEBI:18420"/>
        <label>1</label>
    </ligand>
</feature>
<feature type="binding site" evidence="2">
    <location>
        <position position="268"/>
    </location>
    <ligand>
        <name>Mg(2+)</name>
        <dbReference type="ChEBI" id="CHEBI:18420"/>
        <label>2</label>
    </ligand>
</feature>
<feature type="binding site" evidence="2">
    <location>
        <position position="270"/>
    </location>
    <ligand>
        <name>Mg(2+)</name>
        <dbReference type="ChEBI" id="CHEBI:18420"/>
        <label>2</label>
    </ligand>
</feature>
<gene>
    <name evidence="2" type="primary">ddl</name>
    <name type="ordered locus">Msil_3492</name>
</gene>
<protein>
    <recommendedName>
        <fullName evidence="2">D-alanine--D-alanine ligase</fullName>
        <ecNumber evidence="2">6.3.2.4</ecNumber>
    </recommendedName>
    <alternativeName>
        <fullName evidence="2">D-Ala-D-Ala ligase</fullName>
    </alternativeName>
    <alternativeName>
        <fullName evidence="2">D-alanylalanine synthetase</fullName>
    </alternativeName>
</protein>
<accession>B8ETM9</accession>
<evidence type="ECO:0000250" key="1"/>
<evidence type="ECO:0000255" key="2">
    <source>
        <dbReference type="HAMAP-Rule" id="MF_00047"/>
    </source>
</evidence>
<sequence>MSKHVAVLMGGLSAEREVSLRSGAACAKALEAEGFRVTTLDVDRDIAQKLAALRPDAALNALHGRYGEDGVIQGVLEMLAIPYTHSGVLASALAMQKDRAKDVLRAAGVPVAEGVTIGRFEAAKAHVMTPPYVVKPLGEGSSFGVIIVRADQTHPPQELTRDDWAYGDLVLVERFVAGRELTCAVIGDKAYGVTEIRAADGGWYDYDAKYKAGGSIHILPANLKEFVYQNVQELALVAHRALGCRGVSRTDFRYDDTPQGTGELVVLEVNSQPGMTETSLVPEIAAYAGISFGELVRWMVEDASCDR</sequence>
<comment type="function">
    <text evidence="2">Cell wall formation.</text>
</comment>
<comment type="catalytic activity">
    <reaction evidence="2">
        <text>2 D-alanine + ATP = D-alanyl-D-alanine + ADP + phosphate + H(+)</text>
        <dbReference type="Rhea" id="RHEA:11224"/>
        <dbReference type="ChEBI" id="CHEBI:15378"/>
        <dbReference type="ChEBI" id="CHEBI:30616"/>
        <dbReference type="ChEBI" id="CHEBI:43474"/>
        <dbReference type="ChEBI" id="CHEBI:57416"/>
        <dbReference type="ChEBI" id="CHEBI:57822"/>
        <dbReference type="ChEBI" id="CHEBI:456216"/>
        <dbReference type="EC" id="6.3.2.4"/>
    </reaction>
</comment>
<comment type="cofactor">
    <cofactor evidence="1">
        <name>Mg(2+)</name>
        <dbReference type="ChEBI" id="CHEBI:18420"/>
    </cofactor>
    <cofactor evidence="1">
        <name>Mn(2+)</name>
        <dbReference type="ChEBI" id="CHEBI:29035"/>
    </cofactor>
    <text evidence="1">Binds 2 magnesium or manganese ions per subunit.</text>
</comment>
<comment type="pathway">
    <text evidence="2">Cell wall biogenesis; peptidoglycan biosynthesis.</text>
</comment>
<comment type="subcellular location">
    <subcellularLocation>
        <location evidence="2">Cytoplasm</location>
    </subcellularLocation>
</comment>
<comment type="similarity">
    <text evidence="2">Belongs to the D-alanine--D-alanine ligase family.</text>
</comment>
<reference key="1">
    <citation type="journal article" date="2010" name="J. Bacteriol.">
        <title>Complete genome sequence of the aerobic facultative methanotroph Methylocella silvestris BL2.</title>
        <authorList>
            <person name="Chen Y."/>
            <person name="Crombie A."/>
            <person name="Rahman M.T."/>
            <person name="Dedysh S.N."/>
            <person name="Liesack W."/>
            <person name="Stott M.B."/>
            <person name="Alam M."/>
            <person name="Theisen A.R."/>
            <person name="Murrell J.C."/>
            <person name="Dunfield P.F."/>
        </authorList>
    </citation>
    <scope>NUCLEOTIDE SEQUENCE [LARGE SCALE GENOMIC DNA]</scope>
    <source>
        <strain>DSM 15510 / CIP 108128 / LMG 27833 / NCIMB 13906 / BL2</strain>
    </source>
</reference>
<organism>
    <name type="scientific">Methylocella silvestris (strain DSM 15510 / CIP 108128 / LMG 27833 / NCIMB 13906 / BL2)</name>
    <dbReference type="NCBI Taxonomy" id="395965"/>
    <lineage>
        <taxon>Bacteria</taxon>
        <taxon>Pseudomonadati</taxon>
        <taxon>Pseudomonadota</taxon>
        <taxon>Alphaproteobacteria</taxon>
        <taxon>Hyphomicrobiales</taxon>
        <taxon>Beijerinckiaceae</taxon>
        <taxon>Methylocella</taxon>
    </lineage>
</organism>